<name>NUSB_BACSU</name>
<dbReference type="EMBL" id="D84432">
    <property type="protein sequence ID" value="BAA12571.1"/>
    <property type="molecule type" value="Genomic_DNA"/>
</dbReference>
<dbReference type="EMBL" id="AL009126">
    <property type="protein sequence ID" value="CAB14363.2"/>
    <property type="molecule type" value="Genomic_DNA"/>
</dbReference>
<dbReference type="PIR" id="F69960">
    <property type="entry name" value="F69960"/>
</dbReference>
<dbReference type="RefSeq" id="NP_390312.2">
    <property type="nucleotide sequence ID" value="NC_000964.3"/>
</dbReference>
<dbReference type="RefSeq" id="WP_003230256.1">
    <property type="nucleotide sequence ID" value="NZ_OZ025638.1"/>
</dbReference>
<dbReference type="SMR" id="P54520"/>
<dbReference type="FunCoup" id="P54520">
    <property type="interactions" value="360"/>
</dbReference>
<dbReference type="STRING" id="224308.BSU24320"/>
<dbReference type="PaxDb" id="224308-BSU24320"/>
<dbReference type="EnsemblBacteria" id="CAB14363">
    <property type="protein sequence ID" value="CAB14363"/>
    <property type="gene ID" value="BSU_24320"/>
</dbReference>
<dbReference type="GeneID" id="86873021"/>
<dbReference type="GeneID" id="938606"/>
<dbReference type="KEGG" id="bsu:BSU24320"/>
<dbReference type="PATRIC" id="fig|224308.179.peg.2650"/>
<dbReference type="eggNOG" id="COG0781">
    <property type="taxonomic scope" value="Bacteria"/>
</dbReference>
<dbReference type="InParanoid" id="P54520"/>
<dbReference type="OrthoDB" id="9811381at2"/>
<dbReference type="PhylomeDB" id="P54520"/>
<dbReference type="BioCyc" id="BSUB:BSU24320-MONOMER"/>
<dbReference type="Proteomes" id="UP000001570">
    <property type="component" value="Chromosome"/>
</dbReference>
<dbReference type="GO" id="GO:0005829">
    <property type="term" value="C:cytosol"/>
    <property type="evidence" value="ECO:0000318"/>
    <property type="project" value="GO_Central"/>
</dbReference>
<dbReference type="GO" id="GO:0003723">
    <property type="term" value="F:RNA binding"/>
    <property type="evidence" value="ECO:0007669"/>
    <property type="project" value="UniProtKB-UniRule"/>
</dbReference>
<dbReference type="GO" id="GO:0006353">
    <property type="term" value="P:DNA-templated transcription termination"/>
    <property type="evidence" value="ECO:0007669"/>
    <property type="project" value="UniProtKB-UniRule"/>
</dbReference>
<dbReference type="GO" id="GO:0031564">
    <property type="term" value="P:transcription antitermination"/>
    <property type="evidence" value="ECO:0007669"/>
    <property type="project" value="UniProtKB-KW"/>
</dbReference>
<dbReference type="CDD" id="cd00619">
    <property type="entry name" value="Terminator_NusB"/>
    <property type="match status" value="1"/>
</dbReference>
<dbReference type="FunFam" id="1.10.940.10:FF:000003">
    <property type="entry name" value="Transcription antitermination factor NusB"/>
    <property type="match status" value="1"/>
</dbReference>
<dbReference type="Gene3D" id="1.10.940.10">
    <property type="entry name" value="NusB-like"/>
    <property type="match status" value="1"/>
</dbReference>
<dbReference type="HAMAP" id="MF_00073">
    <property type="entry name" value="NusB"/>
    <property type="match status" value="1"/>
</dbReference>
<dbReference type="InterPro" id="IPR035926">
    <property type="entry name" value="NusB-like_sf"/>
</dbReference>
<dbReference type="InterPro" id="IPR011605">
    <property type="entry name" value="NusB_fam"/>
</dbReference>
<dbReference type="InterPro" id="IPR006027">
    <property type="entry name" value="NusB_RsmB_TIM44"/>
</dbReference>
<dbReference type="NCBIfam" id="TIGR01951">
    <property type="entry name" value="nusB"/>
    <property type="match status" value="1"/>
</dbReference>
<dbReference type="PANTHER" id="PTHR11078:SF3">
    <property type="entry name" value="ANTITERMINATION NUSB DOMAIN-CONTAINING PROTEIN"/>
    <property type="match status" value="1"/>
</dbReference>
<dbReference type="PANTHER" id="PTHR11078">
    <property type="entry name" value="N UTILIZATION SUBSTANCE PROTEIN B-RELATED"/>
    <property type="match status" value="1"/>
</dbReference>
<dbReference type="Pfam" id="PF01029">
    <property type="entry name" value="NusB"/>
    <property type="match status" value="1"/>
</dbReference>
<dbReference type="SUPFAM" id="SSF48013">
    <property type="entry name" value="NusB-like"/>
    <property type="match status" value="1"/>
</dbReference>
<feature type="chain" id="PRO_0000176508" description="Transcription antitermination protein NusB">
    <location>
        <begin position="1"/>
        <end position="131"/>
    </location>
</feature>
<feature type="sequence conflict" description="In Ref. 1; BAA12571." evidence="2" ref="1">
    <original>E</original>
    <variation>G</variation>
    <location>
        <position position="129"/>
    </location>
</feature>
<evidence type="ECO:0000255" key="1">
    <source>
        <dbReference type="HAMAP-Rule" id="MF_00073"/>
    </source>
</evidence>
<evidence type="ECO:0000305" key="2"/>
<proteinExistence type="inferred from homology"/>
<reference key="1">
    <citation type="journal article" date="1996" name="Microbiology">
        <title>Systematic sequencing of the 283 kb 210 degrees-232 degrees region of the Bacillus subtilis genome containing the skin element and many sporulation genes.</title>
        <authorList>
            <person name="Mizuno M."/>
            <person name="Masuda S."/>
            <person name="Takemaru K."/>
            <person name="Hosono S."/>
            <person name="Sato T."/>
            <person name="Takeuchi M."/>
            <person name="Kobayashi Y."/>
        </authorList>
    </citation>
    <scope>NUCLEOTIDE SEQUENCE [GENOMIC DNA]</scope>
    <source>
        <strain>168 / JH642</strain>
    </source>
</reference>
<reference key="2">
    <citation type="journal article" date="1997" name="Nature">
        <title>The complete genome sequence of the Gram-positive bacterium Bacillus subtilis.</title>
        <authorList>
            <person name="Kunst F."/>
            <person name="Ogasawara N."/>
            <person name="Moszer I."/>
            <person name="Albertini A.M."/>
            <person name="Alloni G."/>
            <person name="Azevedo V."/>
            <person name="Bertero M.G."/>
            <person name="Bessieres P."/>
            <person name="Bolotin A."/>
            <person name="Borchert S."/>
            <person name="Borriss R."/>
            <person name="Boursier L."/>
            <person name="Brans A."/>
            <person name="Braun M."/>
            <person name="Brignell S.C."/>
            <person name="Bron S."/>
            <person name="Brouillet S."/>
            <person name="Bruschi C.V."/>
            <person name="Caldwell B."/>
            <person name="Capuano V."/>
            <person name="Carter N.M."/>
            <person name="Choi S.-K."/>
            <person name="Codani J.-J."/>
            <person name="Connerton I.F."/>
            <person name="Cummings N.J."/>
            <person name="Daniel R.A."/>
            <person name="Denizot F."/>
            <person name="Devine K.M."/>
            <person name="Duesterhoeft A."/>
            <person name="Ehrlich S.D."/>
            <person name="Emmerson P.T."/>
            <person name="Entian K.-D."/>
            <person name="Errington J."/>
            <person name="Fabret C."/>
            <person name="Ferrari E."/>
            <person name="Foulger D."/>
            <person name="Fritz C."/>
            <person name="Fujita M."/>
            <person name="Fujita Y."/>
            <person name="Fuma S."/>
            <person name="Galizzi A."/>
            <person name="Galleron N."/>
            <person name="Ghim S.-Y."/>
            <person name="Glaser P."/>
            <person name="Goffeau A."/>
            <person name="Golightly E.J."/>
            <person name="Grandi G."/>
            <person name="Guiseppi G."/>
            <person name="Guy B.J."/>
            <person name="Haga K."/>
            <person name="Haiech J."/>
            <person name="Harwood C.R."/>
            <person name="Henaut A."/>
            <person name="Hilbert H."/>
            <person name="Holsappel S."/>
            <person name="Hosono S."/>
            <person name="Hullo M.-F."/>
            <person name="Itaya M."/>
            <person name="Jones L.-M."/>
            <person name="Joris B."/>
            <person name="Karamata D."/>
            <person name="Kasahara Y."/>
            <person name="Klaerr-Blanchard M."/>
            <person name="Klein C."/>
            <person name="Kobayashi Y."/>
            <person name="Koetter P."/>
            <person name="Koningstein G."/>
            <person name="Krogh S."/>
            <person name="Kumano M."/>
            <person name="Kurita K."/>
            <person name="Lapidus A."/>
            <person name="Lardinois S."/>
            <person name="Lauber J."/>
            <person name="Lazarevic V."/>
            <person name="Lee S.-M."/>
            <person name="Levine A."/>
            <person name="Liu H."/>
            <person name="Masuda S."/>
            <person name="Mauel C."/>
            <person name="Medigue C."/>
            <person name="Medina N."/>
            <person name="Mellado R.P."/>
            <person name="Mizuno M."/>
            <person name="Moestl D."/>
            <person name="Nakai S."/>
            <person name="Noback M."/>
            <person name="Noone D."/>
            <person name="O'Reilly M."/>
            <person name="Ogawa K."/>
            <person name="Ogiwara A."/>
            <person name="Oudega B."/>
            <person name="Park S.-H."/>
            <person name="Parro V."/>
            <person name="Pohl T.M."/>
            <person name="Portetelle D."/>
            <person name="Porwollik S."/>
            <person name="Prescott A.M."/>
            <person name="Presecan E."/>
            <person name="Pujic P."/>
            <person name="Purnelle B."/>
            <person name="Rapoport G."/>
            <person name="Rey M."/>
            <person name="Reynolds S."/>
            <person name="Rieger M."/>
            <person name="Rivolta C."/>
            <person name="Rocha E."/>
            <person name="Roche B."/>
            <person name="Rose M."/>
            <person name="Sadaie Y."/>
            <person name="Sato T."/>
            <person name="Scanlan E."/>
            <person name="Schleich S."/>
            <person name="Schroeter R."/>
            <person name="Scoffone F."/>
            <person name="Sekiguchi J."/>
            <person name="Sekowska A."/>
            <person name="Seror S.J."/>
            <person name="Serror P."/>
            <person name="Shin B.-S."/>
            <person name="Soldo B."/>
            <person name="Sorokin A."/>
            <person name="Tacconi E."/>
            <person name="Takagi T."/>
            <person name="Takahashi H."/>
            <person name="Takemaru K."/>
            <person name="Takeuchi M."/>
            <person name="Tamakoshi A."/>
            <person name="Tanaka T."/>
            <person name="Terpstra P."/>
            <person name="Tognoni A."/>
            <person name="Tosato V."/>
            <person name="Uchiyama S."/>
            <person name="Vandenbol M."/>
            <person name="Vannier F."/>
            <person name="Vassarotti A."/>
            <person name="Viari A."/>
            <person name="Wambutt R."/>
            <person name="Wedler E."/>
            <person name="Wedler H."/>
            <person name="Weitzenegger T."/>
            <person name="Winters P."/>
            <person name="Wipat A."/>
            <person name="Yamamoto H."/>
            <person name="Yamane K."/>
            <person name="Yasumoto K."/>
            <person name="Yata K."/>
            <person name="Yoshida K."/>
            <person name="Yoshikawa H.-F."/>
            <person name="Zumstein E."/>
            <person name="Yoshikawa H."/>
            <person name="Danchin A."/>
        </authorList>
    </citation>
    <scope>NUCLEOTIDE SEQUENCE [LARGE SCALE GENOMIC DNA]</scope>
    <source>
        <strain>168</strain>
    </source>
</reference>
<reference key="3">
    <citation type="journal article" date="2009" name="Microbiology">
        <title>From a consortium sequence to a unified sequence: the Bacillus subtilis 168 reference genome a decade later.</title>
        <authorList>
            <person name="Barbe V."/>
            <person name="Cruveiller S."/>
            <person name="Kunst F."/>
            <person name="Lenoble P."/>
            <person name="Meurice G."/>
            <person name="Sekowska A."/>
            <person name="Vallenet D."/>
            <person name="Wang T."/>
            <person name="Moszer I."/>
            <person name="Medigue C."/>
            <person name="Danchin A."/>
        </authorList>
    </citation>
    <scope>SEQUENCE REVISION TO 129</scope>
</reference>
<comment type="function">
    <text evidence="1">Involved in transcription antitermination. Required for transcription of ribosomal RNA (rRNA) genes. Binds specifically to the boxA antiterminator sequence of the ribosomal RNA (rrn) operons.</text>
</comment>
<comment type="similarity">
    <text evidence="1 2">Belongs to the NusB family.</text>
</comment>
<gene>
    <name evidence="1" type="primary">nusB</name>
    <name type="synonym">yqhZ</name>
    <name type="ordered locus">BSU24320</name>
</gene>
<keyword id="KW-1185">Reference proteome</keyword>
<keyword id="KW-0694">RNA-binding</keyword>
<keyword id="KW-0804">Transcription</keyword>
<keyword id="KW-0889">Transcription antitermination</keyword>
<keyword id="KW-0805">Transcription regulation</keyword>
<organism>
    <name type="scientific">Bacillus subtilis (strain 168)</name>
    <dbReference type="NCBI Taxonomy" id="224308"/>
    <lineage>
        <taxon>Bacteria</taxon>
        <taxon>Bacillati</taxon>
        <taxon>Bacillota</taxon>
        <taxon>Bacilli</taxon>
        <taxon>Bacillales</taxon>
        <taxon>Bacillaceae</taxon>
        <taxon>Bacillus</taxon>
    </lineage>
</organism>
<sequence length="131" mass="14952">MKRRTAREKALQALFQIDVSDIAVNEAIEHALDEEKTDPFFEQLVHGVLEHQDQLDEMISKHLVNWKLDRIANVDRAILRLAAYEMAYAEDIPVNVSMNEAIELAKRFGDDKATKFVNGVLSNIKSDIEQS</sequence>
<accession>P54520</accession>
<protein>
    <recommendedName>
        <fullName evidence="1">Transcription antitermination protein NusB</fullName>
    </recommendedName>
    <alternativeName>
        <fullName evidence="1">Antitermination factor NusB</fullName>
    </alternativeName>
</protein>